<comment type="function">
    <text evidence="1">Required for the formation of a threonylcarbamoyl group on adenosine at position 37 (t(6)A37) in tRNAs that read codons beginning with adenine. Is involved in the transfer of the threonylcarbamoyl moiety of threonylcarbamoyl-AMP (TC-AMP) to the N6 group of A37, together with TsaE and TsaB. TsaD likely plays a direct catalytic role in this reaction.</text>
</comment>
<comment type="catalytic activity">
    <reaction evidence="1">
        <text>L-threonylcarbamoyladenylate + adenosine(37) in tRNA = N(6)-L-threonylcarbamoyladenosine(37) in tRNA + AMP + H(+)</text>
        <dbReference type="Rhea" id="RHEA:37059"/>
        <dbReference type="Rhea" id="RHEA-COMP:10162"/>
        <dbReference type="Rhea" id="RHEA-COMP:10163"/>
        <dbReference type="ChEBI" id="CHEBI:15378"/>
        <dbReference type="ChEBI" id="CHEBI:73682"/>
        <dbReference type="ChEBI" id="CHEBI:74411"/>
        <dbReference type="ChEBI" id="CHEBI:74418"/>
        <dbReference type="ChEBI" id="CHEBI:456215"/>
        <dbReference type="EC" id="2.3.1.234"/>
    </reaction>
</comment>
<comment type="cofactor">
    <cofactor evidence="1">
        <name>Fe(2+)</name>
        <dbReference type="ChEBI" id="CHEBI:29033"/>
    </cofactor>
    <text evidence="1">Binds 1 Fe(2+) ion per subunit.</text>
</comment>
<comment type="subcellular location">
    <subcellularLocation>
        <location evidence="1">Cytoplasm</location>
    </subcellularLocation>
</comment>
<comment type="similarity">
    <text evidence="1">Belongs to the KAE1 / TsaD family.</text>
</comment>
<reference key="1">
    <citation type="journal article" date="2011" name="Stand. Genomic Sci.">
        <title>Complete genome sequence of 'Thioalkalivibrio sulfidophilus' HL-EbGr7.</title>
        <authorList>
            <person name="Muyzer G."/>
            <person name="Sorokin D.Y."/>
            <person name="Mavromatis K."/>
            <person name="Lapidus A."/>
            <person name="Clum A."/>
            <person name="Ivanova N."/>
            <person name="Pati A."/>
            <person name="d'Haeseleer P."/>
            <person name="Woyke T."/>
            <person name="Kyrpides N.C."/>
        </authorList>
    </citation>
    <scope>NUCLEOTIDE SEQUENCE [LARGE SCALE GENOMIC DNA]</scope>
    <source>
        <strain>HL-EbGR7</strain>
    </source>
</reference>
<sequence>MRILGIETSCDETGVAVIDAERGLLSHALYSQVALHAEYGGVVPELASRDHIRKLLPLVRQALDGADTAASDLTGIAYTSGPGLLGALLVGAGVARSLAWAWGLPAVGVHHMEGHLLAPLLGDEPPEFPFLALLVSGGHTMLVDVQGVGRYRILGESLDDAAGEAFDKTAKLLGLSYPGGPALAALAERGDPARFSFPRPMTDRPGLDFSFSGLKTRALTTLRETRTEQDRADVARAFEEAVVDTLVIKCLRAVQETGAERLVVAGGVGANRRLRQRLKEAVGAEGASVHYPPFEFCTDNGAMIALAGLMRFQAGAGEDLTIRARARWNLESKSEV</sequence>
<proteinExistence type="inferred from homology"/>
<evidence type="ECO:0000255" key="1">
    <source>
        <dbReference type="HAMAP-Rule" id="MF_01445"/>
    </source>
</evidence>
<feature type="chain" id="PRO_1000184990" description="tRNA N6-adenosine threonylcarbamoyltransferase">
    <location>
        <begin position="1"/>
        <end position="336"/>
    </location>
</feature>
<feature type="binding site" evidence="1">
    <location>
        <position position="111"/>
    </location>
    <ligand>
        <name>Fe cation</name>
        <dbReference type="ChEBI" id="CHEBI:24875"/>
    </ligand>
</feature>
<feature type="binding site" evidence="1">
    <location>
        <position position="115"/>
    </location>
    <ligand>
        <name>Fe cation</name>
        <dbReference type="ChEBI" id="CHEBI:24875"/>
    </ligand>
</feature>
<feature type="binding site" evidence="1">
    <location>
        <begin position="134"/>
        <end position="138"/>
    </location>
    <ligand>
        <name>substrate</name>
    </ligand>
</feature>
<feature type="binding site" evidence="1">
    <location>
        <position position="167"/>
    </location>
    <ligand>
        <name>substrate</name>
    </ligand>
</feature>
<feature type="binding site" evidence="1">
    <location>
        <position position="180"/>
    </location>
    <ligand>
        <name>substrate</name>
    </ligand>
</feature>
<feature type="binding site" evidence="1">
    <location>
        <position position="271"/>
    </location>
    <ligand>
        <name>substrate</name>
    </ligand>
</feature>
<feature type="binding site" evidence="1">
    <location>
        <position position="299"/>
    </location>
    <ligand>
        <name>Fe cation</name>
        <dbReference type="ChEBI" id="CHEBI:24875"/>
    </ligand>
</feature>
<accession>B8GPT9</accession>
<keyword id="KW-0012">Acyltransferase</keyword>
<keyword id="KW-0963">Cytoplasm</keyword>
<keyword id="KW-0408">Iron</keyword>
<keyword id="KW-0479">Metal-binding</keyword>
<keyword id="KW-1185">Reference proteome</keyword>
<keyword id="KW-0808">Transferase</keyword>
<keyword id="KW-0819">tRNA processing</keyword>
<gene>
    <name evidence="1" type="primary">tsaD</name>
    <name type="synonym">gcp</name>
    <name type="ordered locus">Tgr7_3016</name>
</gene>
<organism>
    <name type="scientific">Thioalkalivibrio sulfidiphilus (strain HL-EbGR7)</name>
    <dbReference type="NCBI Taxonomy" id="396588"/>
    <lineage>
        <taxon>Bacteria</taxon>
        <taxon>Pseudomonadati</taxon>
        <taxon>Pseudomonadota</taxon>
        <taxon>Gammaproteobacteria</taxon>
        <taxon>Chromatiales</taxon>
        <taxon>Ectothiorhodospiraceae</taxon>
        <taxon>Thioalkalivibrio</taxon>
    </lineage>
</organism>
<dbReference type="EC" id="2.3.1.234" evidence="1"/>
<dbReference type="EMBL" id="CP001339">
    <property type="protein sequence ID" value="ACL74086.1"/>
    <property type="molecule type" value="Genomic_DNA"/>
</dbReference>
<dbReference type="RefSeq" id="WP_012639549.1">
    <property type="nucleotide sequence ID" value="NC_011901.1"/>
</dbReference>
<dbReference type="SMR" id="B8GPT9"/>
<dbReference type="STRING" id="396588.Tgr7_3016"/>
<dbReference type="KEGG" id="tgr:Tgr7_3016"/>
<dbReference type="eggNOG" id="COG0533">
    <property type="taxonomic scope" value="Bacteria"/>
</dbReference>
<dbReference type="HOGENOM" id="CLU_023208_0_2_6"/>
<dbReference type="OrthoDB" id="9806197at2"/>
<dbReference type="Proteomes" id="UP000002383">
    <property type="component" value="Chromosome"/>
</dbReference>
<dbReference type="GO" id="GO:0005737">
    <property type="term" value="C:cytoplasm"/>
    <property type="evidence" value="ECO:0007669"/>
    <property type="project" value="UniProtKB-SubCell"/>
</dbReference>
<dbReference type="GO" id="GO:0005506">
    <property type="term" value="F:iron ion binding"/>
    <property type="evidence" value="ECO:0007669"/>
    <property type="project" value="UniProtKB-UniRule"/>
</dbReference>
<dbReference type="GO" id="GO:0061711">
    <property type="term" value="F:N(6)-L-threonylcarbamoyladenine synthase activity"/>
    <property type="evidence" value="ECO:0007669"/>
    <property type="project" value="UniProtKB-EC"/>
</dbReference>
<dbReference type="GO" id="GO:0002949">
    <property type="term" value="P:tRNA threonylcarbamoyladenosine modification"/>
    <property type="evidence" value="ECO:0007669"/>
    <property type="project" value="UniProtKB-UniRule"/>
</dbReference>
<dbReference type="CDD" id="cd24133">
    <property type="entry name" value="ASKHA_NBD_TsaD_bac"/>
    <property type="match status" value="1"/>
</dbReference>
<dbReference type="FunFam" id="3.30.420.40:FF:000031">
    <property type="entry name" value="tRNA N6-adenosine threonylcarbamoyltransferase"/>
    <property type="match status" value="1"/>
</dbReference>
<dbReference type="Gene3D" id="3.30.420.40">
    <property type="match status" value="2"/>
</dbReference>
<dbReference type="HAMAP" id="MF_01445">
    <property type="entry name" value="TsaD"/>
    <property type="match status" value="1"/>
</dbReference>
<dbReference type="InterPro" id="IPR043129">
    <property type="entry name" value="ATPase_NBD"/>
</dbReference>
<dbReference type="InterPro" id="IPR000905">
    <property type="entry name" value="Gcp-like_dom"/>
</dbReference>
<dbReference type="InterPro" id="IPR017861">
    <property type="entry name" value="KAE1/TsaD"/>
</dbReference>
<dbReference type="InterPro" id="IPR017860">
    <property type="entry name" value="Peptidase_M22_CS"/>
</dbReference>
<dbReference type="InterPro" id="IPR022450">
    <property type="entry name" value="TsaD"/>
</dbReference>
<dbReference type="NCBIfam" id="TIGR00329">
    <property type="entry name" value="gcp_kae1"/>
    <property type="match status" value="1"/>
</dbReference>
<dbReference type="NCBIfam" id="TIGR03723">
    <property type="entry name" value="T6A_TsaD_YgjD"/>
    <property type="match status" value="1"/>
</dbReference>
<dbReference type="PANTHER" id="PTHR11735">
    <property type="entry name" value="TRNA N6-ADENOSINE THREONYLCARBAMOYLTRANSFERASE"/>
    <property type="match status" value="1"/>
</dbReference>
<dbReference type="PANTHER" id="PTHR11735:SF6">
    <property type="entry name" value="TRNA N6-ADENOSINE THREONYLCARBAMOYLTRANSFERASE, MITOCHONDRIAL"/>
    <property type="match status" value="1"/>
</dbReference>
<dbReference type="Pfam" id="PF00814">
    <property type="entry name" value="TsaD"/>
    <property type="match status" value="1"/>
</dbReference>
<dbReference type="PRINTS" id="PR00789">
    <property type="entry name" value="OSIALOPTASE"/>
</dbReference>
<dbReference type="SUPFAM" id="SSF53067">
    <property type="entry name" value="Actin-like ATPase domain"/>
    <property type="match status" value="2"/>
</dbReference>
<dbReference type="PROSITE" id="PS01016">
    <property type="entry name" value="GLYCOPROTEASE"/>
    <property type="match status" value="1"/>
</dbReference>
<protein>
    <recommendedName>
        <fullName evidence="1">tRNA N6-adenosine threonylcarbamoyltransferase</fullName>
        <ecNumber evidence="1">2.3.1.234</ecNumber>
    </recommendedName>
    <alternativeName>
        <fullName evidence="1">N6-L-threonylcarbamoyladenine synthase</fullName>
        <shortName evidence="1">t(6)A synthase</shortName>
    </alternativeName>
    <alternativeName>
        <fullName evidence="1">t(6)A37 threonylcarbamoyladenosine biosynthesis protein TsaD</fullName>
    </alternativeName>
    <alternativeName>
        <fullName evidence="1">tRNA threonylcarbamoyladenosine biosynthesis protein TsaD</fullName>
    </alternativeName>
</protein>
<name>TSAD_THISH</name>